<proteinExistence type="evidence at protein level"/>
<dbReference type="PIR" id="A29342">
    <property type="entry name" value="ECMUCR"/>
</dbReference>
<dbReference type="GO" id="GO:0005179">
    <property type="term" value="F:hormone activity"/>
    <property type="evidence" value="ECO:0007669"/>
    <property type="project" value="UniProtKB-KW"/>
</dbReference>
<name>CARP_MYTED</name>
<feature type="peptide" id="PRO_0000044114" description="Catch-relaxing peptide">
    <location>
        <begin position="1"/>
        <end position="7"/>
    </location>
</feature>
<feature type="modified residue" description="Leucine amide" evidence="1">
    <location>
        <position position="7"/>
    </location>
</feature>
<protein>
    <recommendedName>
        <fullName>Catch-relaxing peptide</fullName>
        <shortName>CARP</shortName>
    </recommendedName>
</protein>
<organism>
    <name type="scientific">Mytilus edulis</name>
    <name type="common">Blue mussel</name>
    <dbReference type="NCBI Taxonomy" id="6550"/>
    <lineage>
        <taxon>Eukaryota</taxon>
        <taxon>Metazoa</taxon>
        <taxon>Spiralia</taxon>
        <taxon>Lophotrochozoa</taxon>
        <taxon>Mollusca</taxon>
        <taxon>Bivalvia</taxon>
        <taxon>Autobranchia</taxon>
        <taxon>Pteriomorphia</taxon>
        <taxon>Mytilida</taxon>
        <taxon>Mytiloidea</taxon>
        <taxon>Mytilidae</taxon>
        <taxon>Mytilinae</taxon>
        <taxon>Mytilus</taxon>
    </lineage>
</organism>
<reference key="1">
    <citation type="journal article" date="1987" name="Brain Res.">
        <title>Catch-relaxing peptide isolated from Mytilus pedal ganglia.</title>
        <authorList>
            <person name="Hirata T."/>
            <person name="Kubota I."/>
            <person name="Takabatake I."/>
            <person name="Kawahara A."/>
            <person name="Shimamoto N."/>
            <person name="Muneoka Y."/>
        </authorList>
    </citation>
    <scope>PROTEIN SEQUENCE</scope>
    <scope>AMIDATION AT LEU-7</scope>
</reference>
<keyword id="KW-0027">Amidation</keyword>
<keyword id="KW-0903">Direct protein sequencing</keyword>
<keyword id="KW-0372">Hormone</keyword>
<evidence type="ECO:0000269" key="1">
    <source>
    </source>
</evidence>
<accession>P10420</accession>
<sequence length="7" mass="831">AMPMLRL</sequence>
<comment type="function">
    <text>This peptide exhibits both potentiating (contraction) and inhibitory (relaxation) effects on the anterior byssus retractor muscle.</text>
</comment>